<gene>
    <name type="primary">Pax6</name>
    <name type="synonym">Pax-6</name>
    <name type="synonym">Sey</name>
</gene>
<dbReference type="EMBL" id="X63963">
    <property type="protein sequence ID" value="CAA45379.1"/>
    <property type="molecule type" value="mRNA"/>
</dbReference>
<dbReference type="EMBL" id="X63963">
    <property type="protein sequence ID" value="CAA45380.1"/>
    <property type="molecule type" value="mRNA"/>
</dbReference>
<dbReference type="EMBL" id="Y19196">
    <property type="protein sequence ID" value="CAC80516.1"/>
    <property type="molecule type" value="Genomic_DNA"/>
</dbReference>
<dbReference type="EMBL" id="Y19199">
    <property type="protein sequence ID" value="CAC80519.1"/>
    <property type="molecule type" value="Genomic_DNA"/>
</dbReference>
<dbReference type="EMBL" id="AK028059">
    <property type="protein sequence ID" value="BAC25729.1"/>
    <property type="molecule type" value="mRNA"/>
</dbReference>
<dbReference type="EMBL" id="AK139054">
    <property type="protein sequence ID" value="BAE23875.1"/>
    <property type="molecule type" value="mRNA"/>
</dbReference>
<dbReference type="EMBL" id="BC011272">
    <property type="protein sequence ID" value="AAH11272.1"/>
    <property type="molecule type" value="mRNA"/>
</dbReference>
<dbReference type="EMBL" id="BC036957">
    <property type="protein sequence ID" value="AAH36957.1"/>
    <property type="molecule type" value="mRNA"/>
</dbReference>
<dbReference type="EMBL" id="M77842">
    <property type="protein sequence ID" value="AAA40109.1"/>
    <property type="status" value="ALT_INIT"/>
    <property type="molecule type" value="mRNA"/>
</dbReference>
<dbReference type="CCDS" id="CCDS16499.1">
    <molecule id="P63015-2"/>
</dbReference>
<dbReference type="CCDS" id="CCDS57181.1">
    <molecule id="P63015-1"/>
</dbReference>
<dbReference type="PIR" id="S42234">
    <property type="entry name" value="S42234"/>
</dbReference>
<dbReference type="RefSeq" id="NP_001231127.1">
    <molecule id="P63015-2"/>
    <property type="nucleotide sequence ID" value="NM_001244198.2"/>
</dbReference>
<dbReference type="RefSeq" id="NP_001231129.1">
    <molecule id="P63015-2"/>
    <property type="nucleotide sequence ID" value="NM_001244200.2"/>
</dbReference>
<dbReference type="RefSeq" id="NP_001231130.1">
    <molecule id="P63015-1"/>
    <property type="nucleotide sequence ID" value="NM_001244201.2"/>
</dbReference>
<dbReference type="RefSeq" id="NP_001231131.1">
    <molecule id="P63015-1"/>
    <property type="nucleotide sequence ID" value="NM_001244202.2"/>
</dbReference>
<dbReference type="RefSeq" id="NP_001297073.1">
    <molecule id="P63015-1"/>
    <property type="nucleotide sequence ID" value="NM_001310144.1"/>
</dbReference>
<dbReference type="RefSeq" id="NP_001297074.1">
    <molecule id="P63015-3"/>
    <property type="nucleotide sequence ID" value="NM_001310145.1"/>
</dbReference>
<dbReference type="RefSeq" id="NP_001297075.1">
    <molecule id="P63015-3"/>
    <property type="nucleotide sequence ID" value="NM_001310146.1"/>
</dbReference>
<dbReference type="RefSeq" id="NP_038655.1">
    <molecule id="P63015-2"/>
    <property type="nucleotide sequence ID" value="NM_013627.6"/>
</dbReference>
<dbReference type="SMR" id="P63015"/>
<dbReference type="BioGRID" id="202033">
    <property type="interactions" value="22"/>
</dbReference>
<dbReference type="CORUM" id="P63015"/>
<dbReference type="DIP" id="DIP-38879N"/>
<dbReference type="FunCoup" id="P63015">
    <property type="interactions" value="1624"/>
</dbReference>
<dbReference type="IntAct" id="P63015">
    <property type="interactions" value="9"/>
</dbReference>
<dbReference type="MINT" id="P63015"/>
<dbReference type="STRING" id="10090.ENSMUSP00000087870"/>
<dbReference type="GlyGen" id="P63015">
    <property type="glycosylation" value="1 site, 1 O-linked glycan (1 site)"/>
</dbReference>
<dbReference type="iPTMnet" id="P63015"/>
<dbReference type="PhosphoSitePlus" id="P63015"/>
<dbReference type="PaxDb" id="10090-ENSMUSP00000087870"/>
<dbReference type="ProteomicsDB" id="294331">
    <molecule id="P63015-1"/>
</dbReference>
<dbReference type="ProteomicsDB" id="294332">
    <molecule id="P63015-2"/>
</dbReference>
<dbReference type="ProteomicsDB" id="294333">
    <molecule id="P63015-3"/>
</dbReference>
<dbReference type="Pumba" id="P63015"/>
<dbReference type="Antibodypedia" id="12821">
    <property type="antibodies" value="996 antibodies from 48 providers"/>
</dbReference>
<dbReference type="DNASU" id="18508"/>
<dbReference type="Ensembl" id="ENSMUST00000090391.13">
    <molecule id="P63015-2"/>
    <property type="protein sequence ID" value="ENSMUSP00000087870.6"/>
    <property type="gene ID" value="ENSMUSG00000027168.22"/>
</dbReference>
<dbReference type="Ensembl" id="ENSMUST00000090397.13">
    <molecule id="P63015-1"/>
    <property type="protein sequence ID" value="ENSMUSP00000087878.7"/>
    <property type="gene ID" value="ENSMUSG00000027168.22"/>
</dbReference>
<dbReference type="Ensembl" id="ENSMUST00000111082.8">
    <molecule id="P63015-1"/>
    <property type="protein sequence ID" value="ENSMUSP00000106711.2"/>
    <property type="gene ID" value="ENSMUSG00000027168.22"/>
</dbReference>
<dbReference type="Ensembl" id="ENSMUST00000111083.10">
    <molecule id="P63015-1"/>
    <property type="protein sequence ID" value="ENSMUSP00000106712.3"/>
    <property type="gene ID" value="ENSMUSG00000027168.22"/>
</dbReference>
<dbReference type="Ensembl" id="ENSMUST00000111085.8">
    <molecule id="P63015-2"/>
    <property type="protein sequence ID" value="ENSMUSP00000106714.2"/>
    <property type="gene ID" value="ENSMUSG00000027168.22"/>
</dbReference>
<dbReference type="Ensembl" id="ENSMUST00000111086.11">
    <molecule id="P63015-2"/>
    <property type="protein sequence ID" value="ENSMUSP00000106715.3"/>
    <property type="gene ID" value="ENSMUSG00000027168.22"/>
</dbReference>
<dbReference type="Ensembl" id="ENSMUST00000111087.10">
    <molecule id="P63015-1"/>
    <property type="protein sequence ID" value="ENSMUSP00000106716.3"/>
    <property type="gene ID" value="ENSMUSG00000027168.22"/>
</dbReference>
<dbReference type="Ensembl" id="ENSMUST00000167211.9">
    <molecule id="P63015-2"/>
    <property type="protein sequence ID" value="ENSMUSP00000129344.3"/>
    <property type="gene ID" value="ENSMUSG00000027168.22"/>
</dbReference>
<dbReference type="GeneID" id="18508"/>
<dbReference type="KEGG" id="mmu:18508"/>
<dbReference type="UCSC" id="uc008lku.2">
    <molecule id="P63015-2"/>
    <property type="organism name" value="mouse"/>
</dbReference>
<dbReference type="UCSC" id="uc008lkv.2">
    <molecule id="P63015-1"/>
    <property type="organism name" value="mouse"/>
</dbReference>
<dbReference type="AGR" id="MGI:97490"/>
<dbReference type="CTD" id="5080"/>
<dbReference type="MGI" id="MGI:97490">
    <property type="gene designation" value="Pax6"/>
</dbReference>
<dbReference type="VEuPathDB" id="HostDB:ENSMUSG00000027168"/>
<dbReference type="eggNOG" id="KOG0849">
    <property type="taxonomic scope" value="Eukaryota"/>
</dbReference>
<dbReference type="GeneTree" id="ENSGT00940000155391"/>
<dbReference type="HOGENOM" id="CLU_019281_1_0_1"/>
<dbReference type="InParanoid" id="P63015"/>
<dbReference type="OMA" id="YSHAHST"/>
<dbReference type="OrthoDB" id="58236at9989"/>
<dbReference type="TreeFam" id="TF320146"/>
<dbReference type="BioGRID-ORCS" id="18508">
    <property type="hits" value="2 hits in 77 CRISPR screens"/>
</dbReference>
<dbReference type="ChiTaRS" id="Pax6">
    <property type="organism name" value="mouse"/>
</dbReference>
<dbReference type="PRO" id="PR:P63015"/>
<dbReference type="Proteomes" id="UP000000589">
    <property type="component" value="Chromosome 2"/>
</dbReference>
<dbReference type="RNAct" id="P63015">
    <property type="molecule type" value="protein"/>
</dbReference>
<dbReference type="Bgee" id="ENSMUSG00000027168">
    <property type="expression patterns" value="Expressed in retinal neural layer and 175 other cell types or tissues"/>
</dbReference>
<dbReference type="ExpressionAtlas" id="P63015">
    <property type="expression patterns" value="baseline and differential"/>
</dbReference>
<dbReference type="GO" id="GO:0000785">
    <property type="term" value="C:chromatin"/>
    <property type="evidence" value="ECO:0000314"/>
    <property type="project" value="BHF-UCL"/>
</dbReference>
<dbReference type="GO" id="GO:0005829">
    <property type="term" value="C:cytosol"/>
    <property type="evidence" value="ECO:0007669"/>
    <property type="project" value="Ensembl"/>
</dbReference>
<dbReference type="GO" id="GO:0005654">
    <property type="term" value="C:nucleoplasm"/>
    <property type="evidence" value="ECO:0000304"/>
    <property type="project" value="Reactome"/>
</dbReference>
<dbReference type="GO" id="GO:0005634">
    <property type="term" value="C:nucleus"/>
    <property type="evidence" value="ECO:0000314"/>
    <property type="project" value="UniProtKB"/>
</dbReference>
<dbReference type="GO" id="GO:0005667">
    <property type="term" value="C:transcription regulator complex"/>
    <property type="evidence" value="ECO:0000304"/>
    <property type="project" value="MGI"/>
</dbReference>
<dbReference type="GO" id="GO:0003682">
    <property type="term" value="F:chromatin binding"/>
    <property type="evidence" value="ECO:0000314"/>
    <property type="project" value="MGI"/>
</dbReference>
<dbReference type="GO" id="GO:0031490">
    <property type="term" value="F:chromatin DNA binding"/>
    <property type="evidence" value="ECO:0000314"/>
    <property type="project" value="MGI"/>
</dbReference>
<dbReference type="GO" id="GO:0070410">
    <property type="term" value="F:co-SMAD binding"/>
    <property type="evidence" value="ECO:0000314"/>
    <property type="project" value="BHF-UCL"/>
</dbReference>
<dbReference type="GO" id="GO:0003677">
    <property type="term" value="F:DNA binding"/>
    <property type="evidence" value="ECO:0000314"/>
    <property type="project" value="MGI"/>
</dbReference>
<dbReference type="GO" id="GO:0001228">
    <property type="term" value="F:DNA-binding transcription activator activity, RNA polymerase II-specific"/>
    <property type="evidence" value="ECO:0000314"/>
    <property type="project" value="NTNU_SB"/>
</dbReference>
<dbReference type="GO" id="GO:0003700">
    <property type="term" value="F:DNA-binding transcription factor activity"/>
    <property type="evidence" value="ECO:0000314"/>
    <property type="project" value="MGI"/>
</dbReference>
<dbReference type="GO" id="GO:0000981">
    <property type="term" value="F:DNA-binding transcription factor activity, RNA polymerase II-specific"/>
    <property type="evidence" value="ECO:0000314"/>
    <property type="project" value="BHF-UCL"/>
</dbReference>
<dbReference type="GO" id="GO:0001227">
    <property type="term" value="F:DNA-binding transcription repressor activity, RNA polymerase II-specific"/>
    <property type="evidence" value="ECO:0000314"/>
    <property type="project" value="MGI"/>
</dbReference>
<dbReference type="GO" id="GO:0035035">
    <property type="term" value="F:histone acetyltransferase binding"/>
    <property type="evidence" value="ECO:0000314"/>
    <property type="project" value="BHF-UCL"/>
</dbReference>
<dbReference type="GO" id="GO:0071837">
    <property type="term" value="F:HMG box domain binding"/>
    <property type="evidence" value="ECO:0000353"/>
    <property type="project" value="UniProtKB"/>
</dbReference>
<dbReference type="GO" id="GO:0019901">
    <property type="term" value="F:protein kinase binding"/>
    <property type="evidence" value="ECO:0000353"/>
    <property type="project" value="BHF-UCL"/>
</dbReference>
<dbReference type="GO" id="GO:0070412">
    <property type="term" value="F:R-SMAD binding"/>
    <property type="evidence" value="ECO:0000314"/>
    <property type="project" value="BHF-UCL"/>
</dbReference>
<dbReference type="GO" id="GO:0003723">
    <property type="term" value="F:RNA binding"/>
    <property type="evidence" value="ECO:0000314"/>
    <property type="project" value="MGI"/>
</dbReference>
<dbReference type="GO" id="GO:0000978">
    <property type="term" value="F:RNA polymerase II cis-regulatory region sequence-specific DNA binding"/>
    <property type="evidence" value="ECO:0000314"/>
    <property type="project" value="NTNU_SB"/>
</dbReference>
<dbReference type="GO" id="GO:0000979">
    <property type="term" value="F:RNA polymerase II core promoter sequence-specific DNA binding"/>
    <property type="evidence" value="ECO:0000314"/>
    <property type="project" value="BHF-UCL"/>
</dbReference>
<dbReference type="GO" id="GO:0043565">
    <property type="term" value="F:sequence-specific DNA binding"/>
    <property type="evidence" value="ECO:0000314"/>
    <property type="project" value="MGI"/>
</dbReference>
<dbReference type="GO" id="GO:0000976">
    <property type="term" value="F:transcription cis-regulatory region binding"/>
    <property type="evidence" value="ECO:0000314"/>
    <property type="project" value="UniProtKB"/>
</dbReference>
<dbReference type="GO" id="GO:0001221">
    <property type="term" value="F:transcription coregulator binding"/>
    <property type="evidence" value="ECO:0000353"/>
    <property type="project" value="BHF-UCL"/>
</dbReference>
<dbReference type="GO" id="GO:0031625">
    <property type="term" value="F:ubiquitin protein ligase binding"/>
    <property type="evidence" value="ECO:0000353"/>
    <property type="project" value="UniProtKB"/>
</dbReference>
<dbReference type="GO" id="GO:0009952">
    <property type="term" value="P:anterior/posterior pattern specification"/>
    <property type="evidence" value="ECO:0000315"/>
    <property type="project" value="MGI"/>
</dbReference>
<dbReference type="GO" id="GO:0048708">
    <property type="term" value="P:astrocyte differentiation"/>
    <property type="evidence" value="ECO:0000315"/>
    <property type="project" value="MGI"/>
</dbReference>
<dbReference type="GO" id="GO:0007411">
    <property type="term" value="P:axon guidance"/>
    <property type="evidence" value="ECO:0000315"/>
    <property type="project" value="MGI"/>
</dbReference>
<dbReference type="GO" id="GO:0007409">
    <property type="term" value="P:axonogenesis"/>
    <property type="evidence" value="ECO:0000315"/>
    <property type="project" value="MGI"/>
</dbReference>
<dbReference type="GO" id="GO:0001568">
    <property type="term" value="P:blood vessel development"/>
    <property type="evidence" value="ECO:0007669"/>
    <property type="project" value="Ensembl"/>
</dbReference>
<dbReference type="GO" id="GO:0007420">
    <property type="term" value="P:brain development"/>
    <property type="evidence" value="ECO:0000315"/>
    <property type="project" value="MGI"/>
</dbReference>
<dbReference type="GO" id="GO:0043010">
    <property type="term" value="P:camera-type eye development"/>
    <property type="evidence" value="ECO:0000315"/>
    <property type="project" value="MGI"/>
</dbReference>
<dbReference type="GO" id="GO:0030154">
    <property type="term" value="P:cell differentiation"/>
    <property type="evidence" value="ECO:0000315"/>
    <property type="project" value="MGI"/>
</dbReference>
<dbReference type="GO" id="GO:0045165">
    <property type="term" value="P:cell fate commitment"/>
    <property type="evidence" value="ECO:0000315"/>
    <property type="project" value="MGI"/>
</dbReference>
<dbReference type="GO" id="GO:0001709">
    <property type="term" value="P:cell fate determination"/>
    <property type="evidence" value="ECO:0000315"/>
    <property type="project" value="MGI"/>
</dbReference>
<dbReference type="GO" id="GO:0008283">
    <property type="term" value="P:cell population proliferation"/>
    <property type="evidence" value="ECO:0000315"/>
    <property type="project" value="MGI"/>
</dbReference>
<dbReference type="GO" id="GO:1990830">
    <property type="term" value="P:cellular response to leukemia inhibitory factor"/>
    <property type="evidence" value="ECO:0000270"/>
    <property type="project" value="MGI"/>
</dbReference>
<dbReference type="GO" id="GO:0021987">
    <property type="term" value="P:cerebral cortex development"/>
    <property type="evidence" value="ECO:0000315"/>
    <property type="project" value="MGI"/>
</dbReference>
<dbReference type="GO" id="GO:0021796">
    <property type="term" value="P:cerebral cortex regionalization"/>
    <property type="evidence" value="ECO:0000315"/>
    <property type="project" value="MGI"/>
</dbReference>
<dbReference type="GO" id="GO:0006338">
    <property type="term" value="P:chromatin remodeling"/>
    <property type="evidence" value="ECO:0000315"/>
    <property type="project" value="MGI"/>
</dbReference>
<dbReference type="GO" id="GO:0021902">
    <property type="term" value="P:commitment of neuronal cell to specific neuron type in forebrain"/>
    <property type="evidence" value="ECO:0000315"/>
    <property type="project" value="MGI"/>
</dbReference>
<dbReference type="GO" id="GO:0061303">
    <property type="term" value="P:cornea development in camera-type eye"/>
    <property type="evidence" value="ECO:0007669"/>
    <property type="project" value="Ensembl"/>
</dbReference>
<dbReference type="GO" id="GO:0009950">
    <property type="term" value="P:dorsal/ventral axis specification"/>
    <property type="evidence" value="ECO:0000315"/>
    <property type="project" value="MGI"/>
</dbReference>
<dbReference type="GO" id="GO:0009953">
    <property type="term" value="P:dorsal/ventral pattern formation"/>
    <property type="evidence" value="ECO:0000315"/>
    <property type="project" value="MGI"/>
</dbReference>
<dbReference type="GO" id="GO:0048596">
    <property type="term" value="P:embryonic camera-type eye morphogenesis"/>
    <property type="evidence" value="ECO:0000316"/>
    <property type="project" value="MGI"/>
</dbReference>
<dbReference type="GO" id="GO:0030855">
    <property type="term" value="P:epithelial cell differentiation"/>
    <property type="evidence" value="ECO:0000315"/>
    <property type="project" value="MGI"/>
</dbReference>
<dbReference type="GO" id="GO:0000132">
    <property type="term" value="P:establishment of mitotic spindle orientation"/>
    <property type="evidence" value="ECO:0000315"/>
    <property type="project" value="MGI"/>
</dbReference>
<dbReference type="GO" id="GO:0042462">
    <property type="term" value="P:eye photoreceptor cell development"/>
    <property type="evidence" value="ECO:0000315"/>
    <property type="project" value="MGI"/>
</dbReference>
<dbReference type="GO" id="GO:0030900">
    <property type="term" value="P:forebrain development"/>
    <property type="evidence" value="ECO:0000315"/>
    <property type="project" value="MGI"/>
</dbReference>
<dbReference type="GO" id="GO:0021798">
    <property type="term" value="P:forebrain dorsal/ventral pattern formation"/>
    <property type="evidence" value="ECO:0000315"/>
    <property type="project" value="MGI"/>
</dbReference>
<dbReference type="GO" id="GO:0021905">
    <property type="term" value="P:forebrain-midbrain boundary formation"/>
    <property type="evidence" value="ECO:0000315"/>
    <property type="project" value="MGI"/>
</dbReference>
<dbReference type="GO" id="GO:0010467">
    <property type="term" value="P:gene expression"/>
    <property type="evidence" value="ECO:0000315"/>
    <property type="project" value="MGI"/>
</dbReference>
<dbReference type="GO" id="GO:0042593">
    <property type="term" value="P:glucose homeostasis"/>
    <property type="evidence" value="ECO:0007669"/>
    <property type="project" value="Ensembl"/>
</dbReference>
<dbReference type="GO" id="GO:0021986">
    <property type="term" value="P:habenula development"/>
    <property type="evidence" value="ECO:0000315"/>
    <property type="project" value="MGI"/>
</dbReference>
<dbReference type="GO" id="GO:0061072">
    <property type="term" value="P:iris morphogenesis"/>
    <property type="evidence" value="ECO:0007669"/>
    <property type="project" value="Ensembl"/>
</dbReference>
<dbReference type="GO" id="GO:0030216">
    <property type="term" value="P:keratinocyte differentiation"/>
    <property type="evidence" value="ECO:0000315"/>
    <property type="project" value="MGI"/>
</dbReference>
<dbReference type="GO" id="GO:0032808">
    <property type="term" value="P:lacrimal gland development"/>
    <property type="evidence" value="ECO:0000315"/>
    <property type="project" value="MGI"/>
</dbReference>
<dbReference type="GO" id="GO:0002088">
    <property type="term" value="P:lens development in camera-type eye"/>
    <property type="evidence" value="ECO:0000315"/>
    <property type="project" value="MGI"/>
</dbReference>
<dbReference type="GO" id="GO:0050680">
    <property type="term" value="P:negative regulation of epithelial cell proliferation"/>
    <property type="evidence" value="ECO:0000315"/>
    <property type="project" value="MGI"/>
</dbReference>
<dbReference type="GO" id="GO:2000178">
    <property type="term" value="P:negative regulation of neural precursor cell proliferation"/>
    <property type="evidence" value="ECO:0000315"/>
    <property type="project" value="MGI"/>
</dbReference>
<dbReference type="GO" id="GO:0007406">
    <property type="term" value="P:negative regulation of neuroblast proliferation"/>
    <property type="evidence" value="ECO:0000315"/>
    <property type="project" value="MGI"/>
</dbReference>
<dbReference type="GO" id="GO:0045665">
    <property type="term" value="P:negative regulation of neuron differentiation"/>
    <property type="evidence" value="ECO:0000316"/>
    <property type="project" value="MGI"/>
</dbReference>
<dbReference type="GO" id="GO:0000122">
    <property type="term" value="P:negative regulation of transcription by RNA polymerase II"/>
    <property type="evidence" value="ECO:0000314"/>
    <property type="project" value="UniProtKB"/>
</dbReference>
<dbReference type="GO" id="GO:0007399">
    <property type="term" value="P:nervous system development"/>
    <property type="evidence" value="ECO:0000315"/>
    <property type="project" value="BHF-UCL"/>
</dbReference>
<dbReference type="GO" id="GO:0061351">
    <property type="term" value="P:neural precursor cell proliferation"/>
    <property type="evidence" value="ECO:0000315"/>
    <property type="project" value="MGI"/>
</dbReference>
<dbReference type="GO" id="GO:0007405">
    <property type="term" value="P:neuroblast proliferation"/>
    <property type="evidence" value="ECO:0000315"/>
    <property type="project" value="MGI"/>
</dbReference>
<dbReference type="GO" id="GO:0030182">
    <property type="term" value="P:neuron differentiation"/>
    <property type="evidence" value="ECO:0000315"/>
    <property type="project" value="MGI"/>
</dbReference>
<dbReference type="GO" id="GO:0001764">
    <property type="term" value="P:neuron migration"/>
    <property type="evidence" value="ECO:0000315"/>
    <property type="project" value="MGI"/>
</dbReference>
<dbReference type="GO" id="GO:0021778">
    <property type="term" value="P:oligodendrocyte cell fate specification"/>
    <property type="evidence" value="ECO:0000315"/>
    <property type="project" value="MGI"/>
</dbReference>
<dbReference type="GO" id="GO:0021543">
    <property type="term" value="P:pallium development"/>
    <property type="evidence" value="ECO:0000315"/>
    <property type="project" value="MGI"/>
</dbReference>
<dbReference type="GO" id="GO:0003322">
    <property type="term" value="P:pancreatic A cell development"/>
    <property type="evidence" value="ECO:0000315"/>
    <property type="project" value="BHF-UCL"/>
</dbReference>
<dbReference type="GO" id="GO:0021983">
    <property type="term" value="P:pituitary gland development"/>
    <property type="evidence" value="ECO:0000315"/>
    <property type="project" value="MGI"/>
</dbReference>
<dbReference type="GO" id="GO:0045893">
    <property type="term" value="P:positive regulation of DNA-templated transcription"/>
    <property type="evidence" value="ECO:0000314"/>
    <property type="project" value="BHF-UCL"/>
</dbReference>
<dbReference type="GO" id="GO:0030858">
    <property type="term" value="P:positive regulation of epithelial cell differentiation"/>
    <property type="evidence" value="ECO:0000315"/>
    <property type="project" value="MGI"/>
</dbReference>
<dbReference type="GO" id="GO:0010628">
    <property type="term" value="P:positive regulation of gene expression"/>
    <property type="evidence" value="ECO:0000315"/>
    <property type="project" value="BHF-UCL"/>
</dbReference>
<dbReference type="GO" id="GO:1902895">
    <property type="term" value="P:positive regulation of miRNA transcription"/>
    <property type="evidence" value="ECO:0007669"/>
    <property type="project" value="Ensembl"/>
</dbReference>
<dbReference type="GO" id="GO:0002052">
    <property type="term" value="P:positive regulation of neuroblast proliferation"/>
    <property type="evidence" value="ECO:0000315"/>
    <property type="project" value="MGI"/>
</dbReference>
<dbReference type="GO" id="GO:0045944">
    <property type="term" value="P:positive regulation of transcription by RNA polymerase II"/>
    <property type="evidence" value="ECO:0000314"/>
    <property type="project" value="NTNU_SB"/>
</dbReference>
<dbReference type="GO" id="GO:0033365">
    <property type="term" value="P:protein localization to organelle"/>
    <property type="evidence" value="ECO:0000315"/>
    <property type="project" value="MGI"/>
</dbReference>
<dbReference type="GO" id="GO:0003002">
    <property type="term" value="P:regionalization"/>
    <property type="evidence" value="ECO:0000315"/>
    <property type="project" value="MGI"/>
</dbReference>
<dbReference type="GO" id="GO:0009786">
    <property type="term" value="P:regulation of asymmetric cell division"/>
    <property type="evidence" value="ECO:0000315"/>
    <property type="project" value="MGI"/>
</dbReference>
<dbReference type="GO" id="GO:0030334">
    <property type="term" value="P:regulation of cell migration"/>
    <property type="evidence" value="ECO:0000315"/>
    <property type="project" value="MGI"/>
</dbReference>
<dbReference type="GO" id="GO:0006355">
    <property type="term" value="P:regulation of DNA-templated transcription"/>
    <property type="evidence" value="ECO:0000304"/>
    <property type="project" value="MGI"/>
</dbReference>
<dbReference type="GO" id="GO:0010468">
    <property type="term" value="P:regulation of gene expression"/>
    <property type="evidence" value="ECO:0000315"/>
    <property type="project" value="MGI"/>
</dbReference>
<dbReference type="GO" id="GO:0050767">
    <property type="term" value="P:regulation of neurogenesis"/>
    <property type="evidence" value="ECO:0000315"/>
    <property type="project" value="MGI"/>
</dbReference>
<dbReference type="GO" id="GO:0045664">
    <property type="term" value="P:regulation of neuron differentiation"/>
    <property type="evidence" value="ECO:0000315"/>
    <property type="project" value="MGI"/>
</dbReference>
<dbReference type="GO" id="GO:0048505">
    <property type="term" value="P:regulation of timing of cell differentiation"/>
    <property type="evidence" value="ECO:0000315"/>
    <property type="project" value="MGI"/>
</dbReference>
<dbReference type="GO" id="GO:0006357">
    <property type="term" value="P:regulation of transcription by RNA polymerase II"/>
    <property type="evidence" value="ECO:0000315"/>
    <property type="project" value="MGI"/>
</dbReference>
<dbReference type="GO" id="GO:0009611">
    <property type="term" value="P:response to wounding"/>
    <property type="evidence" value="ECO:0007669"/>
    <property type="project" value="Ensembl"/>
</dbReference>
<dbReference type="GO" id="GO:0060041">
    <property type="term" value="P:retina development in camera-type eye"/>
    <property type="evidence" value="ECO:0000316"/>
    <property type="project" value="MGI"/>
</dbReference>
<dbReference type="GO" id="GO:0007435">
    <property type="term" value="P:salivary gland morphogenesis"/>
    <property type="evidence" value="ECO:0000315"/>
    <property type="project" value="MGI"/>
</dbReference>
<dbReference type="GO" id="GO:0023019">
    <property type="term" value="P:signal transduction involved in regulation of gene expression"/>
    <property type="evidence" value="ECO:0000314"/>
    <property type="project" value="MGI"/>
</dbReference>
<dbReference type="GO" id="GO:0007224">
    <property type="term" value="P:smoothened signaling pathway"/>
    <property type="evidence" value="ECO:0000314"/>
    <property type="project" value="MGI"/>
</dbReference>
<dbReference type="GO" id="GO:0021978">
    <property type="term" value="P:telencephalon regionalization"/>
    <property type="evidence" value="ECO:0000315"/>
    <property type="project" value="MGI"/>
</dbReference>
<dbReference type="GO" id="GO:0006366">
    <property type="term" value="P:transcription by RNA polymerase II"/>
    <property type="evidence" value="ECO:0000316"/>
    <property type="project" value="MGI"/>
</dbReference>
<dbReference type="GO" id="GO:0003309">
    <property type="term" value="P:type B pancreatic cell differentiation"/>
    <property type="evidence" value="ECO:0000315"/>
    <property type="project" value="MGI"/>
</dbReference>
<dbReference type="GO" id="GO:0021517">
    <property type="term" value="P:ventral spinal cord development"/>
    <property type="evidence" value="ECO:0000315"/>
    <property type="project" value="UniProtKB"/>
</dbReference>
<dbReference type="GO" id="GO:0007601">
    <property type="term" value="P:visual perception"/>
    <property type="evidence" value="ECO:0000315"/>
    <property type="project" value="MGI"/>
</dbReference>
<dbReference type="CDD" id="cd00086">
    <property type="entry name" value="homeodomain"/>
    <property type="match status" value="1"/>
</dbReference>
<dbReference type="CDD" id="cd00131">
    <property type="entry name" value="PAX"/>
    <property type="match status" value="1"/>
</dbReference>
<dbReference type="FunFam" id="1.10.10.10:FF:000003">
    <property type="entry name" value="Paired box protein Pax-6"/>
    <property type="match status" value="1"/>
</dbReference>
<dbReference type="FunFam" id="1.10.10.10:FF:000069">
    <property type="entry name" value="Paired box protein Pax-6"/>
    <property type="match status" value="1"/>
</dbReference>
<dbReference type="FunFam" id="1.10.10.60:FF:000028">
    <property type="entry name" value="Paired box protein Pax-6"/>
    <property type="match status" value="1"/>
</dbReference>
<dbReference type="Gene3D" id="1.10.10.60">
    <property type="entry name" value="Homeodomain-like"/>
    <property type="match status" value="1"/>
</dbReference>
<dbReference type="Gene3D" id="1.10.10.10">
    <property type="entry name" value="Winged helix-like DNA-binding domain superfamily/Winged helix DNA-binding domain"/>
    <property type="match status" value="2"/>
</dbReference>
<dbReference type="InterPro" id="IPR001356">
    <property type="entry name" value="HD"/>
</dbReference>
<dbReference type="InterPro" id="IPR017970">
    <property type="entry name" value="Homeobox_CS"/>
</dbReference>
<dbReference type="InterPro" id="IPR009057">
    <property type="entry name" value="Homeodomain-like_sf"/>
</dbReference>
<dbReference type="InterPro" id="IPR043182">
    <property type="entry name" value="PAIRED_DNA-bd_dom"/>
</dbReference>
<dbReference type="InterPro" id="IPR001523">
    <property type="entry name" value="Paired_dom"/>
</dbReference>
<dbReference type="InterPro" id="IPR043565">
    <property type="entry name" value="PAX_fam"/>
</dbReference>
<dbReference type="InterPro" id="IPR036388">
    <property type="entry name" value="WH-like_DNA-bd_sf"/>
</dbReference>
<dbReference type="PANTHER" id="PTHR45636:SF48">
    <property type="entry name" value="PAIRED BOX PROTEIN PAX-6"/>
    <property type="match status" value="1"/>
</dbReference>
<dbReference type="PANTHER" id="PTHR45636">
    <property type="entry name" value="PAIRED BOX PROTEIN PAX-6-RELATED-RELATED"/>
    <property type="match status" value="1"/>
</dbReference>
<dbReference type="Pfam" id="PF00046">
    <property type="entry name" value="Homeodomain"/>
    <property type="match status" value="1"/>
</dbReference>
<dbReference type="Pfam" id="PF00292">
    <property type="entry name" value="PAX"/>
    <property type="match status" value="1"/>
</dbReference>
<dbReference type="PRINTS" id="PR00027">
    <property type="entry name" value="PAIREDBOX"/>
</dbReference>
<dbReference type="SMART" id="SM00389">
    <property type="entry name" value="HOX"/>
    <property type="match status" value="1"/>
</dbReference>
<dbReference type="SMART" id="SM00351">
    <property type="entry name" value="PAX"/>
    <property type="match status" value="1"/>
</dbReference>
<dbReference type="SUPFAM" id="SSF46689">
    <property type="entry name" value="Homeodomain-like"/>
    <property type="match status" value="2"/>
</dbReference>
<dbReference type="PROSITE" id="PS00027">
    <property type="entry name" value="HOMEOBOX_1"/>
    <property type="match status" value="1"/>
</dbReference>
<dbReference type="PROSITE" id="PS50071">
    <property type="entry name" value="HOMEOBOX_2"/>
    <property type="match status" value="1"/>
</dbReference>
<dbReference type="PROSITE" id="PS00034">
    <property type="entry name" value="PAIRED_1"/>
    <property type="match status" value="1"/>
</dbReference>
<dbReference type="PROSITE" id="PS51057">
    <property type="entry name" value="PAIRED_2"/>
    <property type="match status" value="1"/>
</dbReference>
<organism>
    <name type="scientific">Mus musculus</name>
    <name type="common">Mouse</name>
    <dbReference type="NCBI Taxonomy" id="10090"/>
    <lineage>
        <taxon>Eukaryota</taxon>
        <taxon>Metazoa</taxon>
        <taxon>Chordata</taxon>
        <taxon>Craniata</taxon>
        <taxon>Vertebrata</taxon>
        <taxon>Euteleostomi</taxon>
        <taxon>Mammalia</taxon>
        <taxon>Eutheria</taxon>
        <taxon>Euarchontoglires</taxon>
        <taxon>Glires</taxon>
        <taxon>Rodentia</taxon>
        <taxon>Myomorpha</taxon>
        <taxon>Muroidea</taxon>
        <taxon>Muridae</taxon>
        <taxon>Murinae</taxon>
        <taxon>Mus</taxon>
        <taxon>Mus</taxon>
    </lineage>
</organism>
<sequence length="422" mass="46683">MQNSHSGVNQLGGVFVNGRPLPDSTRQKIVELAHSGARPCDISRILQVSNGCVSKILGRYYETGSIRPRAIGGSKPRVATPEVVSKIAQYKRECPSIFAWEIRDRLLSEGVCTNDNIPSVSSINRVLRNLASEKQQMGADGMYDKLRMLNGQTGSWGTRPGWYPGTSVPGQPTQDGCQQQEGGGENTNSISSNGEDSDEAQMRLQLKRKLQRNRTSFTQEQIEALEKEFERTHYPDVFARERLAAKIDLPEARIQVWFSNRRAKWRREEKLRNQRRQASNTPSHIPISSSFSTSVYQPIPQPTTPVSSFTSGSMLGRTDTALTNTYSALPPMPSFTMANNLPMQPPVPSQTSSYSCMLPTSPSVNGRSYDTYTPPHMQTHMNSQPMGTSGTTSTGLISPGVSVPVQVPGSEPDMSQYWPRLQ</sequence>
<keyword id="KW-0025">Alternative splicing</keyword>
<keyword id="KW-0963">Cytoplasm</keyword>
<keyword id="KW-0217">Developmental protein</keyword>
<keyword id="KW-0221">Differentiation</keyword>
<keyword id="KW-0903">Direct protein sequencing</keyword>
<keyword id="KW-0225">Disease variant</keyword>
<keyword id="KW-0238">DNA-binding</keyword>
<keyword id="KW-0371">Homeobox</keyword>
<keyword id="KW-0539">Nucleus</keyword>
<keyword id="KW-0563">Paired box</keyword>
<keyword id="KW-1185">Reference proteome</keyword>
<keyword id="KW-0804">Transcription</keyword>
<keyword id="KW-0805">Transcription regulation</keyword>
<keyword id="KW-0832">Ubl conjugation</keyword>
<comment type="function">
    <text evidence="1 11 12">Transcription factor with important functions in the development of the eye, nose, central nervous system and pancreas. Required for the differentiation of pancreatic islet alpha cells (PubMed:9163426). Competes with PAX4 in binding to a common element in the glucagon, insulin and somatostatin promoters. Regulates specification of the ventral neuron subtypes by establishing the correct progenitor domains (By similarity). Acts as a transcriptional repressor of NFATC1-mediated gene expression (PubMed:23990468).</text>
</comment>
<comment type="subunit">
    <text evidence="8 9 11">Interacts with MAF and MAFB (PubMed:17901057). Interacts with TRIM11; this interaction leads to ubiquitination and proteasomal degradation, as well as inhibition of transactivation, possibly in part by preventing PAX6 binding to consensus DNA sequences (PubMed:18628401). Interacts with TLE6/GRG6 (PubMed:23990468).</text>
</comment>
<comment type="interaction">
    <interactant intactId="EBI-1395428">
        <id>P63015</id>
    </interactant>
    <interactant intactId="EBI-371515">
        <id>O35845</id>
        <label>Smarca4</label>
    </interactant>
    <organismsDiffer>false</organismsDiffer>
    <experiments>2</experiments>
</comment>
<comment type="interaction">
    <interactant intactId="EBI-1395428">
        <id>P63015</id>
    </interactant>
    <interactant intactId="EBI-80152">
        <id>P63166</id>
        <label>Sumo1</label>
    </interactant>
    <organismsDiffer>false</organismsDiffer>
    <experiments>2</experiments>
</comment>
<comment type="subcellular location">
    <subcellularLocation>
        <location evidence="11">Nucleus</location>
    </subcellularLocation>
</comment>
<comment type="subcellular location">
    <molecule>Isoform 1</molecule>
    <subcellularLocation>
        <location evidence="2">Nucleus</location>
    </subcellularLocation>
</comment>
<comment type="subcellular location">
    <molecule>Isoform 3</molecule>
    <subcellularLocation>
        <location evidence="10">Nucleus</location>
    </subcellularLocation>
    <subcellularLocation>
        <location evidence="10">Cytoplasm</location>
    </subcellularLocation>
</comment>
<comment type="subcellular location">
    <molecule>Isoform 5a</molecule>
    <subcellularLocation>
        <location evidence="2">Nucleus</location>
    </subcellularLocation>
</comment>
<comment type="alternative products">
    <event type="alternative splicing"/>
    <isoform>
        <id>P63015-1</id>
        <name>1</name>
        <sequence type="displayed"/>
    </isoform>
    <isoform>
        <id>P63015-2</id>
        <name>5a</name>
        <name>Pax6-5a</name>
        <sequence type="described" ref="VSP_011530"/>
    </isoform>
    <isoform>
        <id>P63015-3</id>
        <name>3</name>
        <name>p32</name>
        <sequence type="described" ref="VSP_054294"/>
    </isoform>
</comment>
<comment type="tissue specificity">
    <text evidence="11">Expressed in osteoclasts.</text>
</comment>
<comment type="tissue specificity">
    <molecule>Isoform 1</molecule>
    <text evidence="10">Dominant isoform expressed in the eye, including in the retina and cornea (PubMed:21084637). Abundantly expressed in the lens epithelium (PubMed:21084637).</text>
</comment>
<comment type="tissue specificity">
    <molecule>Isoform 3</molecule>
    <text evidence="10">Dominant isoform expressed in the eye, including in the retina and cornea (PubMed:21084637). Weakly expressed in the lens epithelium (PubMed:21084637).</text>
</comment>
<comment type="developmental stage">
    <text evidence="9 10">Expressed in the developing eye, nose, brain and pancreas (PubMed:21084637). At 9 dpc, expressed in the telencephalon, diencephalon, neural tube, optic vesicle and pancreas. Throughout development, expression continues in the dorsal and ventral pancreas. Expressed during cortical neurogenesis from 11 to 18 dpc. High levels in the early radial glial progenitors from 11 to 14 dpc and gradually decrease thereafter (at protein level). During corticogenesis, the protein level declines faster than that of the mRNA, due to proteasomal degradation (PubMed:18628401).</text>
</comment>
<comment type="developmental stage">
    <molecule>Isoform 1</molecule>
    <text evidence="10">Abundantly expressed in the newborn eye.</text>
</comment>
<comment type="developmental stage">
    <molecule>Isoform 3</molecule>
    <text evidence="10">Expressed in the developing eye at 9.5 dpc, the expression becomes much stronger and additionally expressed in the neural tube and optic and lens vesicles at 11.5 dpc. Expression is then reduced by 12.5 dpc and becomes significantly decreased from 14.5 dpc to 18.5 dpc of embryonic development.</text>
</comment>
<comment type="developmental stage">
    <molecule>Isoform 5a</molecule>
    <text evidence="10">Significantly expressed in the newborn eye.</text>
</comment>
<comment type="induction">
    <text evidence="11">Induced by TNFSF11/RANKL-induced osteoclastogenesis.</text>
</comment>
<comment type="PTM">
    <text evidence="9">Ubiquitinated by TRIM11, leading to ubiquitination and proteasomal degradation.</text>
</comment>
<comment type="PTM">
    <molecule>Isoform 3</molecule>
    <text evidence="10">Sumoylated by SUMO1 at 'Lys-91'.</text>
</comment>
<comment type="disease">
    <text evidence="7">Defects in Pax6 are the cause of a condition known as small eye (Sey) which results in the complete lack of eyes and nasal primordia.</text>
</comment>
<comment type="similarity">
    <text evidence="16">Belongs to the paired homeobox family.</text>
</comment>
<comment type="sequence caution" evidence="16">
    <conflict type="erroneous initiation">
        <sequence resource="EMBL-CDS" id="AAA40109"/>
    </conflict>
    <text>Truncated N-terminus.</text>
</comment>
<feature type="chain" id="PRO_0000050186" description="Paired box protein Pax-6">
    <location>
        <begin position="1"/>
        <end position="422"/>
    </location>
</feature>
<feature type="DNA-binding region" description="Paired" evidence="4">
    <location>
        <begin position="4"/>
        <end position="130"/>
    </location>
</feature>
<feature type="DNA-binding region" description="Homeobox" evidence="3">
    <location>
        <begin position="210"/>
        <end position="269"/>
    </location>
</feature>
<feature type="region of interest" description="PAI subdomain" evidence="4">
    <location>
        <begin position="7"/>
        <end position="63"/>
    </location>
</feature>
<feature type="region of interest" description="RED subdomain" evidence="4">
    <location>
        <begin position="82"/>
        <end position="130"/>
    </location>
</feature>
<feature type="region of interest" description="Disordered" evidence="5">
    <location>
        <begin position="162"/>
        <end position="201"/>
    </location>
</feature>
<feature type="region of interest" description="Disordered" evidence="5">
    <location>
        <begin position="269"/>
        <end position="311"/>
    </location>
</feature>
<feature type="region of interest" description="Required for suppression of NFATC1-mediated transcription" evidence="11">
    <location>
        <begin position="345"/>
        <end position="422"/>
    </location>
</feature>
<feature type="compositionally biased region" description="Low complexity" evidence="5">
    <location>
        <begin position="281"/>
        <end position="294"/>
    </location>
</feature>
<feature type="splice variant" id="VSP_054294" description="In isoform 3." evidence="14">
    <location>
        <begin position="1"/>
        <end position="136"/>
    </location>
</feature>
<feature type="splice variant" id="VSP_011530" description="In isoform 5a." evidence="13 15">
    <original>Q</original>
    <variation>QTHADAKVQVLDNEN</variation>
    <location>
        <position position="47"/>
    </location>
</feature>
<feature type="sequence variant" description="In Pax6(4Neu); defective." evidence="6">
    <original>S</original>
    <variation>P</variation>
    <location>
        <position position="259"/>
    </location>
</feature>
<feature type="sequence conflict" description="In Ref. 3; BAC25729." evidence="16" ref="3">
    <original>G</original>
    <variation>E</variation>
    <location>
        <position position="18"/>
    </location>
</feature>
<feature type="sequence conflict" description="In Ref. 3; BAC25729." evidence="16" ref="3">
    <original>E</original>
    <variation>Q</variation>
    <location>
        <position position="31"/>
    </location>
</feature>
<feature type="sequence conflict" description="In Ref. 6; AAA40109." evidence="16" ref="6">
    <original>I</original>
    <variation>T</variation>
    <location>
        <position position="287"/>
    </location>
</feature>
<feature type="sequence conflict" description="In Ref. 6; AAA40109." evidence="16" ref="6">
    <location>
        <begin position="421"/>
        <end position="422"/>
    </location>
</feature>
<protein>
    <recommendedName>
        <fullName>Paired box protein Pax-6</fullName>
    </recommendedName>
    <alternativeName>
        <fullName>Oculorhombin</fullName>
    </alternativeName>
</protein>
<proteinExistence type="evidence at protein level"/>
<evidence type="ECO:0000250" key="1"/>
<evidence type="ECO:0000250" key="2">
    <source>
        <dbReference type="UniProtKB" id="P63016"/>
    </source>
</evidence>
<evidence type="ECO:0000255" key="3">
    <source>
        <dbReference type="PROSITE-ProRule" id="PRU00108"/>
    </source>
</evidence>
<evidence type="ECO:0000255" key="4">
    <source>
        <dbReference type="PROSITE-ProRule" id="PRU00381"/>
    </source>
</evidence>
<evidence type="ECO:0000256" key="5">
    <source>
        <dbReference type="SAM" id="MobiDB-lite"/>
    </source>
</evidence>
<evidence type="ECO:0000269" key="6">
    <source>
    </source>
</evidence>
<evidence type="ECO:0000269" key="7">
    <source>
    </source>
</evidence>
<evidence type="ECO:0000269" key="8">
    <source>
    </source>
</evidence>
<evidence type="ECO:0000269" key="9">
    <source>
    </source>
</evidence>
<evidence type="ECO:0000269" key="10">
    <source>
    </source>
</evidence>
<evidence type="ECO:0000269" key="11">
    <source>
    </source>
</evidence>
<evidence type="ECO:0000269" key="12">
    <source>
    </source>
</evidence>
<evidence type="ECO:0000303" key="13">
    <source>
    </source>
</evidence>
<evidence type="ECO:0000303" key="14">
    <source>
    </source>
</evidence>
<evidence type="ECO:0000303" key="15">
    <source>
    </source>
</evidence>
<evidence type="ECO:0000305" key="16"/>
<reference key="1">
    <citation type="journal article" date="1991" name="Development">
        <title>Pax-6, a murine paired box gene, is expressed in the developing CNS.</title>
        <authorList>
            <person name="Walther C."/>
            <person name="Gruss P."/>
        </authorList>
    </citation>
    <scope>NUCLEOTIDE SEQUENCE [MRNA] (ISOFORMS 1 AND 5A)</scope>
    <scope>PARTIAL PROTEIN SEQUENCE</scope>
</reference>
<reference key="2">
    <citation type="journal article" date="2001" name="Genetics">
        <title>Molecular characterization of Pax6(2Neu) through Pax6(10Neu): an extension of the Pax6 allelic series and the identification of two possible hypomorph alleles in the mouse Mus musculus.</title>
        <authorList>
            <person name="Favor J."/>
            <person name="Peters H."/>
            <person name="Hermann T."/>
            <person name="Schmahl W."/>
            <person name="Chatterjee B."/>
            <person name="Neuhauser-Klaus A."/>
            <person name="Sandulache R."/>
        </authorList>
    </citation>
    <scope>NUCLEOTIDE SEQUENCE [GENOMIC DNA] (ISOFORM 5A)</scope>
    <scope>VARIANT PRO-259</scope>
    <source>
        <strain>C3H/HeJ</strain>
        <tissue>Head</tissue>
    </source>
</reference>
<reference key="3">
    <citation type="journal article" date="2005" name="Science">
        <title>The transcriptional landscape of the mammalian genome.</title>
        <authorList>
            <person name="Carninci P."/>
            <person name="Kasukawa T."/>
            <person name="Katayama S."/>
            <person name="Gough J."/>
            <person name="Frith M.C."/>
            <person name="Maeda N."/>
            <person name="Oyama R."/>
            <person name="Ravasi T."/>
            <person name="Lenhard B."/>
            <person name="Wells C."/>
            <person name="Kodzius R."/>
            <person name="Shimokawa K."/>
            <person name="Bajic V.B."/>
            <person name="Brenner S.E."/>
            <person name="Batalov S."/>
            <person name="Forrest A.R."/>
            <person name="Zavolan M."/>
            <person name="Davis M.J."/>
            <person name="Wilming L.G."/>
            <person name="Aidinis V."/>
            <person name="Allen J.E."/>
            <person name="Ambesi-Impiombato A."/>
            <person name="Apweiler R."/>
            <person name="Aturaliya R.N."/>
            <person name="Bailey T.L."/>
            <person name="Bansal M."/>
            <person name="Baxter L."/>
            <person name="Beisel K.W."/>
            <person name="Bersano T."/>
            <person name="Bono H."/>
            <person name="Chalk A.M."/>
            <person name="Chiu K.P."/>
            <person name="Choudhary V."/>
            <person name="Christoffels A."/>
            <person name="Clutterbuck D.R."/>
            <person name="Crowe M.L."/>
            <person name="Dalla E."/>
            <person name="Dalrymple B.P."/>
            <person name="de Bono B."/>
            <person name="Della Gatta G."/>
            <person name="di Bernardo D."/>
            <person name="Down T."/>
            <person name="Engstrom P."/>
            <person name="Fagiolini M."/>
            <person name="Faulkner G."/>
            <person name="Fletcher C.F."/>
            <person name="Fukushima T."/>
            <person name="Furuno M."/>
            <person name="Futaki S."/>
            <person name="Gariboldi M."/>
            <person name="Georgii-Hemming P."/>
            <person name="Gingeras T.R."/>
            <person name="Gojobori T."/>
            <person name="Green R.E."/>
            <person name="Gustincich S."/>
            <person name="Harbers M."/>
            <person name="Hayashi Y."/>
            <person name="Hensch T.K."/>
            <person name="Hirokawa N."/>
            <person name="Hill D."/>
            <person name="Huminiecki L."/>
            <person name="Iacono M."/>
            <person name="Ikeo K."/>
            <person name="Iwama A."/>
            <person name="Ishikawa T."/>
            <person name="Jakt M."/>
            <person name="Kanapin A."/>
            <person name="Katoh M."/>
            <person name="Kawasawa Y."/>
            <person name="Kelso J."/>
            <person name="Kitamura H."/>
            <person name="Kitano H."/>
            <person name="Kollias G."/>
            <person name="Krishnan S.P."/>
            <person name="Kruger A."/>
            <person name="Kummerfeld S.K."/>
            <person name="Kurochkin I.V."/>
            <person name="Lareau L.F."/>
            <person name="Lazarevic D."/>
            <person name="Lipovich L."/>
            <person name="Liu J."/>
            <person name="Liuni S."/>
            <person name="McWilliam S."/>
            <person name="Madan Babu M."/>
            <person name="Madera M."/>
            <person name="Marchionni L."/>
            <person name="Matsuda H."/>
            <person name="Matsuzawa S."/>
            <person name="Miki H."/>
            <person name="Mignone F."/>
            <person name="Miyake S."/>
            <person name="Morris K."/>
            <person name="Mottagui-Tabar S."/>
            <person name="Mulder N."/>
            <person name="Nakano N."/>
            <person name="Nakauchi H."/>
            <person name="Ng P."/>
            <person name="Nilsson R."/>
            <person name="Nishiguchi S."/>
            <person name="Nishikawa S."/>
            <person name="Nori F."/>
            <person name="Ohara O."/>
            <person name="Okazaki Y."/>
            <person name="Orlando V."/>
            <person name="Pang K.C."/>
            <person name="Pavan W.J."/>
            <person name="Pavesi G."/>
            <person name="Pesole G."/>
            <person name="Petrovsky N."/>
            <person name="Piazza S."/>
            <person name="Reed J."/>
            <person name="Reid J.F."/>
            <person name="Ring B.Z."/>
            <person name="Ringwald M."/>
            <person name="Rost B."/>
            <person name="Ruan Y."/>
            <person name="Salzberg S.L."/>
            <person name="Sandelin A."/>
            <person name="Schneider C."/>
            <person name="Schoenbach C."/>
            <person name="Sekiguchi K."/>
            <person name="Semple C.A."/>
            <person name="Seno S."/>
            <person name="Sessa L."/>
            <person name="Sheng Y."/>
            <person name="Shibata Y."/>
            <person name="Shimada H."/>
            <person name="Shimada K."/>
            <person name="Silva D."/>
            <person name="Sinclair B."/>
            <person name="Sperling S."/>
            <person name="Stupka E."/>
            <person name="Sugiura K."/>
            <person name="Sultana R."/>
            <person name="Takenaka Y."/>
            <person name="Taki K."/>
            <person name="Tammoja K."/>
            <person name="Tan S.L."/>
            <person name="Tang S."/>
            <person name="Taylor M.S."/>
            <person name="Tegner J."/>
            <person name="Teichmann S.A."/>
            <person name="Ueda H.R."/>
            <person name="van Nimwegen E."/>
            <person name="Verardo R."/>
            <person name="Wei C.L."/>
            <person name="Yagi K."/>
            <person name="Yamanishi H."/>
            <person name="Zabarovsky E."/>
            <person name="Zhu S."/>
            <person name="Zimmer A."/>
            <person name="Hide W."/>
            <person name="Bult C."/>
            <person name="Grimmond S.M."/>
            <person name="Teasdale R.D."/>
            <person name="Liu E.T."/>
            <person name="Brusic V."/>
            <person name="Quackenbush J."/>
            <person name="Wahlestedt C."/>
            <person name="Mattick J.S."/>
            <person name="Hume D.A."/>
            <person name="Kai C."/>
            <person name="Sasaki D."/>
            <person name="Tomaru Y."/>
            <person name="Fukuda S."/>
            <person name="Kanamori-Katayama M."/>
            <person name="Suzuki M."/>
            <person name="Aoki J."/>
            <person name="Arakawa T."/>
            <person name="Iida J."/>
            <person name="Imamura K."/>
            <person name="Itoh M."/>
            <person name="Kato T."/>
            <person name="Kawaji H."/>
            <person name="Kawagashira N."/>
            <person name="Kawashima T."/>
            <person name="Kojima M."/>
            <person name="Kondo S."/>
            <person name="Konno H."/>
            <person name="Nakano K."/>
            <person name="Ninomiya N."/>
            <person name="Nishio T."/>
            <person name="Okada M."/>
            <person name="Plessy C."/>
            <person name="Shibata K."/>
            <person name="Shiraki T."/>
            <person name="Suzuki S."/>
            <person name="Tagami M."/>
            <person name="Waki K."/>
            <person name="Watahiki A."/>
            <person name="Okamura-Oho Y."/>
            <person name="Suzuki H."/>
            <person name="Kawai J."/>
            <person name="Hayashizaki Y."/>
        </authorList>
    </citation>
    <scope>NUCLEOTIDE SEQUENCE [LARGE SCALE MRNA] (ISOFORMS 1 AND 3)</scope>
    <source>
        <strain>C57BL/6J</strain>
        <tissue>Cerebellum</tissue>
    </source>
</reference>
<reference key="4">
    <citation type="journal article" date="2004" name="Genome Res.">
        <title>The status, quality, and expansion of the NIH full-length cDNA project: the Mammalian Gene Collection (MGC).</title>
        <authorList>
            <consortium name="The MGC Project Team"/>
        </authorList>
    </citation>
    <scope>NUCLEOTIDE SEQUENCE [LARGE SCALE MRNA] (ISOFORM 5A)</scope>
    <source>
        <strain>Czech II</strain>
        <tissue>Eye</tissue>
        <tissue>Mammary tumor</tissue>
    </source>
</reference>
<reference key="5">
    <citation type="journal article" date="1991" name="Genomics">
        <title>Pax: a murine multigene family of paired box-containing genes.</title>
        <authorList>
            <person name="Walther C."/>
            <person name="Guenet J.-L."/>
            <person name="Simon D."/>
            <person name="Deutsch U."/>
            <person name="Jostes B."/>
            <person name="Goulding M.D."/>
            <person name="Plachov D."/>
            <person name="Balling R."/>
            <person name="Gruss P."/>
        </authorList>
    </citation>
    <scope>NUCLEOTIDE SEQUENCE [MRNA] OF 4-131 (ISOFORM 1)</scope>
</reference>
<reference key="6">
    <citation type="journal article" date="1992" name="Genomics">
        <title>Small eye (Sey): cloning and characterization of the murine homolog of the human aniridia gene.</title>
        <authorList>
            <person name="Ton C.C.T."/>
            <person name="Miwa H."/>
            <person name="Saunders G.F."/>
        </authorList>
    </citation>
    <scope>NUCLEOTIDE SEQUENCE [MRNA] OF 45-422 (ISOFORM 1)</scope>
    <source>
        <tissue>Embryo</tissue>
    </source>
</reference>
<reference key="7">
    <citation type="journal article" date="1991" name="Nature">
        <title>Mouse small eye results from mutations in a paired-like homeobox-containing gene.</title>
        <authorList>
            <person name="Hill R.E."/>
            <person name="Favor J."/>
            <person name="Hogan B.L.M."/>
            <person name="Ton C.C.T."/>
            <person name="Saunders G.F."/>
            <person name="Hanson I.M."/>
            <person name="Prosser J."/>
            <person name="Jordan T."/>
            <person name="Hastie N.D."/>
            <person name="van Heyningen V."/>
        </authorList>
    </citation>
    <scope>INVOLVEMENT IN SEY</scope>
</reference>
<reference key="8">
    <citation type="journal article" date="1997" name="Nature">
        <title>Pax6 is required for differentiation of glucagon-producing alpha-cells in mouse pancreas.</title>
        <authorList>
            <person name="St Onge L."/>
            <person name="Sosa-Pineda B."/>
            <person name="Chowdhury K."/>
            <person name="Mansouri A."/>
            <person name="Gruss P."/>
        </authorList>
    </citation>
    <scope>FUNCTION IN PANCREAS</scope>
</reference>
<reference key="9">
    <citation type="journal article" date="2007" name="J. Biol. Chem.">
        <title>Pax-6 and c-Maf functionally interact with the alpha-cell-specific DNA element G1 in vivo to promote glucagon gene expression.</title>
        <authorList>
            <person name="Gosmain Y."/>
            <person name="Avril I."/>
            <person name="Mamin A."/>
            <person name="Philippe J."/>
        </authorList>
    </citation>
    <scope>INTERACTION WITH MAF AND MAFB</scope>
</reference>
<reference key="10">
    <citation type="journal article" date="2008" name="Genes Dev.">
        <title>Trim11 modulates the function of neurogenic transcription factor Pax6 through ubiquitin-proteosome system.</title>
        <authorList>
            <person name="Tuoc T.C."/>
            <person name="Stoykova A."/>
        </authorList>
    </citation>
    <scope>INTERACTION WITH TRIM11</scope>
    <scope>UBIQUITINATION</scope>
    <scope>DEVELOPMENTAL STAGE</scope>
</reference>
<reference key="11">
    <citation type="journal article" date="2010" name="Proc. Natl. Acad. Sci. U.S.A.">
        <title>Sumoylation activates the transcriptional activity of Pax-6, an important transcription factor for eye and brain development.</title>
        <authorList>
            <person name="Yan Q."/>
            <person name="Gong L."/>
            <person name="Deng M."/>
            <person name="Zhang L."/>
            <person name="Sun S."/>
            <person name="Liu J."/>
            <person name="Ma H."/>
            <person name="Yuan D."/>
            <person name="Chen P.C."/>
            <person name="Hu X."/>
            <person name="Liu J."/>
            <person name="Qin J."/>
            <person name="Xiao L."/>
            <person name="Huang X.Q."/>
            <person name="Zhang J."/>
            <person name="Li D.W."/>
        </authorList>
    </citation>
    <scope>SUBCELLULAR LOCATION</scope>
    <scope>TISSUE SPECIFICITY</scope>
    <scope>DEVELOPMENTAL STAGE</scope>
    <scope>SUMOYLATION</scope>
</reference>
<reference key="12">
    <citation type="journal article" date="2013" name="J. Biol. Chem.">
        <title>The paired-box homeodomain transcription factor Pax6 binds to the upstream region of the TRAP gene promoter and suppresses receptor activator of NF-kappaB ligand (RANKL)-induced osteoclast differentiation.</title>
        <authorList>
            <person name="Kogawa M."/>
            <person name="Hisatake K."/>
            <person name="Atkins G.J."/>
            <person name="Findlay D.M."/>
            <person name="Enoki Y."/>
            <person name="Sato T."/>
            <person name="Gray P.C."/>
            <person name="Kanesaki-Yatsuka Y."/>
            <person name="Anderson P.H."/>
            <person name="Wada S."/>
            <person name="Kato N."/>
            <person name="Fukuda A."/>
            <person name="Katayama S."/>
            <person name="Tsujimoto M."/>
            <person name="Yoda T."/>
            <person name="Suda T."/>
            <person name="Okazaki Y."/>
            <person name="Matsumoto M."/>
        </authorList>
    </citation>
    <scope>FUNCTION</scope>
    <scope>INTERACTION WITH TLE6</scope>
    <scope>SUBCELLULAR LOCATION</scope>
    <scope>TISSUE SPECIFICITY</scope>
    <scope>INDUCTION BY TNFSF11-INDUCED OSTEOCLASTOGENESIS</scope>
</reference>
<accession>P63015</accession>
<accession>P32117</accession>
<accession>P70601</accession>
<accession>Q3UTV5</accession>
<accession>Q62222</accession>
<accession>Q64037</accession>
<accession>Q8CEI5</accession>
<accession>Q8VDB5</accession>
<accession>Q921Q8</accession>
<name>PAX6_MOUSE</name>